<accession>A5UA11</accession>
<keyword id="KW-0066">ATP synthesis</keyword>
<keyword id="KW-0067">ATP-binding</keyword>
<keyword id="KW-0997">Cell inner membrane</keyword>
<keyword id="KW-1003">Cell membrane</keyword>
<keyword id="KW-0139">CF(1)</keyword>
<keyword id="KW-0375">Hydrogen ion transport</keyword>
<keyword id="KW-0406">Ion transport</keyword>
<keyword id="KW-0472">Membrane</keyword>
<keyword id="KW-0547">Nucleotide-binding</keyword>
<keyword id="KW-1278">Translocase</keyword>
<keyword id="KW-0813">Transport</keyword>
<proteinExistence type="inferred from homology"/>
<name>ATPB_HAEIE</name>
<evidence type="ECO:0000255" key="1">
    <source>
        <dbReference type="HAMAP-Rule" id="MF_01347"/>
    </source>
</evidence>
<gene>
    <name evidence="1" type="primary">atpD</name>
    <name type="ordered locus">CGSHiEE_00590</name>
</gene>
<reference key="1">
    <citation type="journal article" date="2007" name="Genome Biol.">
        <title>Characterization and modeling of the Haemophilus influenzae core and supragenomes based on the complete genomic sequences of Rd and 12 clinical nontypeable strains.</title>
        <authorList>
            <person name="Hogg J.S."/>
            <person name="Hu F.Z."/>
            <person name="Janto B."/>
            <person name="Boissy R."/>
            <person name="Hayes J."/>
            <person name="Keefe R."/>
            <person name="Post J.C."/>
            <person name="Ehrlich G.D."/>
        </authorList>
    </citation>
    <scope>NUCLEOTIDE SEQUENCE [LARGE SCALE GENOMIC DNA]</scope>
    <source>
        <strain>PittEE</strain>
    </source>
</reference>
<organism>
    <name type="scientific">Haemophilus influenzae (strain PittEE)</name>
    <dbReference type="NCBI Taxonomy" id="374930"/>
    <lineage>
        <taxon>Bacteria</taxon>
        <taxon>Pseudomonadati</taxon>
        <taxon>Pseudomonadota</taxon>
        <taxon>Gammaproteobacteria</taxon>
        <taxon>Pasteurellales</taxon>
        <taxon>Pasteurellaceae</taxon>
        <taxon>Haemophilus</taxon>
    </lineage>
</organism>
<feature type="chain" id="PRO_1000055118" description="ATP synthase subunit beta">
    <location>
        <begin position="1"/>
        <end position="457"/>
    </location>
</feature>
<feature type="binding site" evidence="1">
    <location>
        <begin position="147"/>
        <end position="154"/>
    </location>
    <ligand>
        <name>ATP</name>
        <dbReference type="ChEBI" id="CHEBI:30616"/>
    </ligand>
</feature>
<protein>
    <recommendedName>
        <fullName evidence="1">ATP synthase subunit beta</fullName>
        <ecNumber evidence="1">7.1.2.2</ecNumber>
    </recommendedName>
    <alternativeName>
        <fullName evidence="1">ATP synthase F1 sector subunit beta</fullName>
    </alternativeName>
    <alternativeName>
        <fullName evidence="1">F-ATPase subunit beta</fullName>
    </alternativeName>
</protein>
<dbReference type="EC" id="7.1.2.2" evidence="1"/>
<dbReference type="EMBL" id="CP000671">
    <property type="protein sequence ID" value="ABQ97612.1"/>
    <property type="molecule type" value="Genomic_DNA"/>
</dbReference>
<dbReference type="SMR" id="A5UA11"/>
<dbReference type="KEGG" id="hip:CGSHiEE_00590"/>
<dbReference type="HOGENOM" id="CLU_022398_0_2_6"/>
<dbReference type="GO" id="GO:0005886">
    <property type="term" value="C:plasma membrane"/>
    <property type="evidence" value="ECO:0007669"/>
    <property type="project" value="UniProtKB-SubCell"/>
</dbReference>
<dbReference type="GO" id="GO:0045259">
    <property type="term" value="C:proton-transporting ATP synthase complex"/>
    <property type="evidence" value="ECO:0007669"/>
    <property type="project" value="UniProtKB-KW"/>
</dbReference>
<dbReference type="GO" id="GO:0005524">
    <property type="term" value="F:ATP binding"/>
    <property type="evidence" value="ECO:0007669"/>
    <property type="project" value="UniProtKB-UniRule"/>
</dbReference>
<dbReference type="GO" id="GO:0016887">
    <property type="term" value="F:ATP hydrolysis activity"/>
    <property type="evidence" value="ECO:0007669"/>
    <property type="project" value="InterPro"/>
</dbReference>
<dbReference type="GO" id="GO:0046933">
    <property type="term" value="F:proton-transporting ATP synthase activity, rotational mechanism"/>
    <property type="evidence" value="ECO:0007669"/>
    <property type="project" value="UniProtKB-UniRule"/>
</dbReference>
<dbReference type="CDD" id="cd18110">
    <property type="entry name" value="ATP-synt_F1_beta_C"/>
    <property type="match status" value="1"/>
</dbReference>
<dbReference type="CDD" id="cd18115">
    <property type="entry name" value="ATP-synt_F1_beta_N"/>
    <property type="match status" value="1"/>
</dbReference>
<dbReference type="CDD" id="cd01133">
    <property type="entry name" value="F1-ATPase_beta_CD"/>
    <property type="match status" value="1"/>
</dbReference>
<dbReference type="FunFam" id="1.10.1140.10:FF:000001">
    <property type="entry name" value="ATP synthase subunit beta"/>
    <property type="match status" value="1"/>
</dbReference>
<dbReference type="FunFam" id="2.40.10.170:FF:000003">
    <property type="entry name" value="ATP synthase subunit beta"/>
    <property type="match status" value="1"/>
</dbReference>
<dbReference type="FunFam" id="3.40.50.300:FF:000004">
    <property type="entry name" value="ATP synthase subunit beta"/>
    <property type="match status" value="1"/>
</dbReference>
<dbReference type="Gene3D" id="2.40.10.170">
    <property type="match status" value="1"/>
</dbReference>
<dbReference type="Gene3D" id="1.10.1140.10">
    <property type="entry name" value="Bovine Mitochondrial F1-atpase, Atp Synthase Beta Chain, Chain D, domain 3"/>
    <property type="match status" value="1"/>
</dbReference>
<dbReference type="Gene3D" id="3.40.50.300">
    <property type="entry name" value="P-loop containing nucleotide triphosphate hydrolases"/>
    <property type="match status" value="1"/>
</dbReference>
<dbReference type="HAMAP" id="MF_01347">
    <property type="entry name" value="ATP_synth_beta_bact"/>
    <property type="match status" value="1"/>
</dbReference>
<dbReference type="InterPro" id="IPR003593">
    <property type="entry name" value="AAA+_ATPase"/>
</dbReference>
<dbReference type="InterPro" id="IPR055190">
    <property type="entry name" value="ATP-synt_VA_C"/>
</dbReference>
<dbReference type="InterPro" id="IPR005722">
    <property type="entry name" value="ATP_synth_F1_bsu"/>
</dbReference>
<dbReference type="InterPro" id="IPR020003">
    <property type="entry name" value="ATPase_a/bsu_AS"/>
</dbReference>
<dbReference type="InterPro" id="IPR050053">
    <property type="entry name" value="ATPase_alpha/beta_chains"/>
</dbReference>
<dbReference type="InterPro" id="IPR004100">
    <property type="entry name" value="ATPase_F1/V1/A1_a/bsu_N"/>
</dbReference>
<dbReference type="InterPro" id="IPR036121">
    <property type="entry name" value="ATPase_F1/V1/A1_a/bsu_N_sf"/>
</dbReference>
<dbReference type="InterPro" id="IPR000194">
    <property type="entry name" value="ATPase_F1/V1/A1_a/bsu_nucl-bd"/>
</dbReference>
<dbReference type="InterPro" id="IPR024034">
    <property type="entry name" value="ATPase_F1/V1_b/a_C"/>
</dbReference>
<dbReference type="InterPro" id="IPR027417">
    <property type="entry name" value="P-loop_NTPase"/>
</dbReference>
<dbReference type="NCBIfam" id="TIGR01039">
    <property type="entry name" value="atpD"/>
    <property type="match status" value="1"/>
</dbReference>
<dbReference type="PANTHER" id="PTHR15184">
    <property type="entry name" value="ATP SYNTHASE"/>
    <property type="match status" value="1"/>
</dbReference>
<dbReference type="PANTHER" id="PTHR15184:SF71">
    <property type="entry name" value="ATP SYNTHASE SUBUNIT BETA, MITOCHONDRIAL"/>
    <property type="match status" value="1"/>
</dbReference>
<dbReference type="Pfam" id="PF00006">
    <property type="entry name" value="ATP-synt_ab"/>
    <property type="match status" value="1"/>
</dbReference>
<dbReference type="Pfam" id="PF02874">
    <property type="entry name" value="ATP-synt_ab_N"/>
    <property type="match status" value="1"/>
</dbReference>
<dbReference type="Pfam" id="PF22919">
    <property type="entry name" value="ATP-synt_VA_C"/>
    <property type="match status" value="1"/>
</dbReference>
<dbReference type="SMART" id="SM00382">
    <property type="entry name" value="AAA"/>
    <property type="match status" value="1"/>
</dbReference>
<dbReference type="SUPFAM" id="SSF47917">
    <property type="entry name" value="C-terminal domain of alpha and beta subunits of F1 ATP synthase"/>
    <property type="match status" value="1"/>
</dbReference>
<dbReference type="SUPFAM" id="SSF50615">
    <property type="entry name" value="N-terminal domain of alpha and beta subunits of F1 ATP synthase"/>
    <property type="match status" value="1"/>
</dbReference>
<dbReference type="SUPFAM" id="SSF52540">
    <property type="entry name" value="P-loop containing nucleoside triphosphate hydrolases"/>
    <property type="match status" value="1"/>
</dbReference>
<dbReference type="PROSITE" id="PS00152">
    <property type="entry name" value="ATPASE_ALPHA_BETA"/>
    <property type="match status" value="1"/>
</dbReference>
<sequence>MSAGKIVQIIGAVIDVEFPQDAVPKVYDALKVESGLTLEVQQQLGGGVVRCIALGTSDGLKRGLKVENTNNPIQVPVGTKTLGRIMNVLGEPIDEQGAIGEEERWAIHRSAPSYEEQSNSTELLETGIKVIDLICPFAKGGKVGLFGGAGVGKTVNMMELIRNIAIEHSGYSVFAGVGERTREGNDFYHEMKDSNVLDKVSLVYGQMNEPPGNRLRVALTGLTMAEKFRDEGRDVLFFVDNIYRYTLAGTEVSALLGRMPSAVGYQPTLAEEMGVLQERITSTKTGSITSVQAVYVPADDLTDPSPATTFAHLDSTVVLSRQIASLGIYPAVDPLDSTSRQLDPLVVGQEHYDVARGVQGILQRYKELKDIIAILGMDELSEEDKLVVARARKIERFLSQPFFVAEVFTGSPGKYVTLKDTIRGFKGILEGEYDHIPEQAFYMVGSIDEVLEKAKNM</sequence>
<comment type="function">
    <text evidence="1">Produces ATP from ADP in the presence of a proton gradient across the membrane. The catalytic sites are hosted primarily by the beta subunits.</text>
</comment>
<comment type="catalytic activity">
    <reaction evidence="1">
        <text>ATP + H2O + 4 H(+)(in) = ADP + phosphate + 5 H(+)(out)</text>
        <dbReference type="Rhea" id="RHEA:57720"/>
        <dbReference type="ChEBI" id="CHEBI:15377"/>
        <dbReference type="ChEBI" id="CHEBI:15378"/>
        <dbReference type="ChEBI" id="CHEBI:30616"/>
        <dbReference type="ChEBI" id="CHEBI:43474"/>
        <dbReference type="ChEBI" id="CHEBI:456216"/>
        <dbReference type="EC" id="7.1.2.2"/>
    </reaction>
</comment>
<comment type="subunit">
    <text evidence="1">F-type ATPases have 2 components, CF(1) - the catalytic core - and CF(0) - the membrane proton channel. CF(1) has five subunits: alpha(3), beta(3), gamma(1), delta(1), epsilon(1). CF(0) has three main subunits: a(1), b(2) and c(9-12). The alpha and beta chains form an alternating ring which encloses part of the gamma chain. CF(1) is attached to CF(0) by a central stalk formed by the gamma and epsilon chains, while a peripheral stalk is formed by the delta and b chains.</text>
</comment>
<comment type="subcellular location">
    <subcellularLocation>
        <location evidence="1">Cell inner membrane</location>
        <topology evidence="1">Peripheral membrane protein</topology>
    </subcellularLocation>
</comment>
<comment type="similarity">
    <text evidence="1">Belongs to the ATPase alpha/beta chains family.</text>
</comment>